<accession>A3M1K4</accession>
<feature type="chain" id="PRO_1000088850" description="Ribosome-binding factor A">
    <location>
        <begin position="1"/>
        <end position="133"/>
    </location>
</feature>
<proteinExistence type="inferred from homology"/>
<sequence>MAGGQRLKRMADSVQRELSELIRQELKDPRLGGLVTISGVKVSPDLGYADVYVTVMGRELSDDQNEVAHRETLDILNKASGFLRQELSRRIKTRITPRLRFHYDKTNAYGNYMFGLIEKAVQDLPKRESDDEE</sequence>
<keyword id="KW-0963">Cytoplasm</keyword>
<keyword id="KW-0690">Ribosome biogenesis</keyword>
<reference key="1">
    <citation type="journal article" date="2007" name="Genes Dev.">
        <title>New insights into Acinetobacter baumannii pathogenesis revealed by high-density pyrosequencing and transposon mutagenesis.</title>
        <authorList>
            <person name="Smith M.G."/>
            <person name="Gianoulis T.A."/>
            <person name="Pukatzki S."/>
            <person name="Mekalanos J.J."/>
            <person name="Ornston L.N."/>
            <person name="Gerstein M."/>
            <person name="Snyder M."/>
        </authorList>
    </citation>
    <scope>NUCLEOTIDE SEQUENCE [LARGE SCALE GENOMIC DNA]</scope>
    <source>
        <strain>ATCC 17978 / DSM 105126 / CIP 53.77 / LMG 1025 / NCDC KC755 / 5377</strain>
    </source>
</reference>
<evidence type="ECO:0000255" key="1">
    <source>
        <dbReference type="HAMAP-Rule" id="MF_00003"/>
    </source>
</evidence>
<dbReference type="EMBL" id="CP000521">
    <property type="protein sequence ID" value="ABO10798.2"/>
    <property type="molecule type" value="Genomic_DNA"/>
</dbReference>
<dbReference type="RefSeq" id="WP_000897046.1">
    <property type="nucleotide sequence ID" value="NZ_CP053098.1"/>
</dbReference>
<dbReference type="SMR" id="A3M1K4"/>
<dbReference type="KEGG" id="acb:A1S_0338"/>
<dbReference type="HOGENOM" id="CLU_089475_5_0_6"/>
<dbReference type="GO" id="GO:0005829">
    <property type="term" value="C:cytosol"/>
    <property type="evidence" value="ECO:0007669"/>
    <property type="project" value="TreeGrafter"/>
</dbReference>
<dbReference type="GO" id="GO:0043024">
    <property type="term" value="F:ribosomal small subunit binding"/>
    <property type="evidence" value="ECO:0007669"/>
    <property type="project" value="TreeGrafter"/>
</dbReference>
<dbReference type="GO" id="GO:0030490">
    <property type="term" value="P:maturation of SSU-rRNA"/>
    <property type="evidence" value="ECO:0007669"/>
    <property type="project" value="UniProtKB-UniRule"/>
</dbReference>
<dbReference type="Gene3D" id="3.30.300.20">
    <property type="match status" value="1"/>
</dbReference>
<dbReference type="HAMAP" id="MF_00003">
    <property type="entry name" value="RbfA"/>
    <property type="match status" value="1"/>
</dbReference>
<dbReference type="InterPro" id="IPR015946">
    <property type="entry name" value="KH_dom-like_a/b"/>
</dbReference>
<dbReference type="InterPro" id="IPR000238">
    <property type="entry name" value="RbfA"/>
</dbReference>
<dbReference type="InterPro" id="IPR023799">
    <property type="entry name" value="RbfA_dom_sf"/>
</dbReference>
<dbReference type="NCBIfam" id="NF010389">
    <property type="entry name" value="PRK13816.1"/>
    <property type="match status" value="1"/>
</dbReference>
<dbReference type="NCBIfam" id="TIGR00082">
    <property type="entry name" value="rbfA"/>
    <property type="match status" value="1"/>
</dbReference>
<dbReference type="PANTHER" id="PTHR33515">
    <property type="entry name" value="RIBOSOME-BINDING FACTOR A, CHLOROPLASTIC-RELATED"/>
    <property type="match status" value="1"/>
</dbReference>
<dbReference type="PANTHER" id="PTHR33515:SF1">
    <property type="entry name" value="RIBOSOME-BINDING FACTOR A, CHLOROPLASTIC-RELATED"/>
    <property type="match status" value="1"/>
</dbReference>
<dbReference type="Pfam" id="PF02033">
    <property type="entry name" value="RBFA"/>
    <property type="match status" value="1"/>
</dbReference>
<dbReference type="SUPFAM" id="SSF89919">
    <property type="entry name" value="Ribosome-binding factor A, RbfA"/>
    <property type="match status" value="1"/>
</dbReference>
<comment type="function">
    <text evidence="1">One of several proteins that assist in the late maturation steps of the functional core of the 30S ribosomal subunit. Associates with free 30S ribosomal subunits (but not with 30S subunits that are part of 70S ribosomes or polysomes). Required for efficient processing of 16S rRNA. May interact with the 5'-terminal helix region of 16S rRNA.</text>
</comment>
<comment type="subunit">
    <text evidence="1">Monomer. Binds 30S ribosomal subunits, but not 50S ribosomal subunits or 70S ribosomes.</text>
</comment>
<comment type="subcellular location">
    <subcellularLocation>
        <location evidence="1">Cytoplasm</location>
    </subcellularLocation>
</comment>
<comment type="similarity">
    <text evidence="1">Belongs to the RbfA family.</text>
</comment>
<protein>
    <recommendedName>
        <fullName evidence="1">Ribosome-binding factor A</fullName>
    </recommendedName>
</protein>
<gene>
    <name evidence="1" type="primary">rbfA</name>
    <name type="ordered locus">A1S_0338</name>
</gene>
<organism>
    <name type="scientific">Acinetobacter baumannii (strain ATCC 17978 / DSM 105126 / CIP 53.77 / LMG 1025 / NCDC KC755 / 5377)</name>
    <dbReference type="NCBI Taxonomy" id="400667"/>
    <lineage>
        <taxon>Bacteria</taxon>
        <taxon>Pseudomonadati</taxon>
        <taxon>Pseudomonadota</taxon>
        <taxon>Gammaproteobacteria</taxon>
        <taxon>Moraxellales</taxon>
        <taxon>Moraxellaceae</taxon>
        <taxon>Acinetobacter</taxon>
        <taxon>Acinetobacter calcoaceticus/baumannii complex</taxon>
    </lineage>
</organism>
<name>RBFA_ACIBT</name>